<proteinExistence type="inferred from homology"/>
<keyword id="KW-0175">Coiled coil</keyword>
<keyword id="KW-0227">DNA damage</keyword>
<keyword id="KW-0234">DNA repair</keyword>
<keyword id="KW-0255">Endonuclease</keyword>
<keyword id="KW-0269">Exonuclease</keyword>
<keyword id="KW-0378">Hydrolase</keyword>
<keyword id="KW-0460">Magnesium</keyword>
<keyword id="KW-0464">Manganese</keyword>
<keyword id="KW-0479">Metal-binding</keyword>
<keyword id="KW-0540">Nuclease</keyword>
<keyword id="KW-0539">Nucleus</keyword>
<keyword id="KW-0597">Phosphoprotein</keyword>
<keyword id="KW-1185">Reference proteome</keyword>
<keyword id="KW-0832">Ubl conjugation</keyword>
<keyword id="KW-0862">Zinc</keyword>
<keyword id="KW-0863">Zinc-finger</keyword>
<sequence length="1025" mass="114770">MSEGKSPAKKRARRSLSISKTKKNECNSIISFFNNVPPAKLACPICSKMVPRYDLNWHLDEKCANNDNITPVDLRHVGFTDSSGSTVNLTNTVLENVTPGKLSPSKASLTPDPSDSAKMGIKQQTSPYFKNNKDLVFKNQDKLRHHNVKVITLGSLSSKLSRRYTEARRSICKKNEEFASKSPQSPSSTVVRSPVDNCSEIEDKDQILENSSQKENVFTCDSLNEQRTEHSVEDTKVLEAESQEATQECGRSPLTPAFSDNAFVLFSPDLTRGNPLRSTSEDSLEWETITGIDGKDVEKCEAGSCEEVKVTVASEAKTQLSDWEAKCHSSTPDDSKGCNIQDLLLEGDSDLKNEITCRIPLEQGSSCDVPDKTVTVPPSHPYYLRSFLVVLKAVFENEEDRMLFDEHEKEIVTKFYQLSASAQKLYVRLFQRKFSWLKMNKLEYEEIAPDLTPVIGELQQAGFLQTESELQELSEVLELLSAPELKTLAKTFHLVNPNGQKQQLVDTFLKLAKQPSVCTWGKNQPGIGAVILKRAKGLAGQALRVCKGPRAVFSRVLLLFSLTDSLEDEEAACGGQGQLSTVLLVNLGRMEFPRYTINRKTQIFQDRDDLIRYAAAAHMLSDISTAMANGNWKEANELSQCAKSDWNKLKSHPSLRYHENLPLFLRCFTVGWIYTRILSRTVEILQRLHMYEEAVKELESLLSQRVYCPDSRGRWWDRLALNLHQHLKRLEPAIKCITEGLADPEVRTGHRLSLYQRALRLRESPSCQKYRHLFHQLPEVTVGDVKHVTITGRLCPQRGMGKSVFVMEAGGPTAPATVLCSVEEVALAYYRRSGFDQGIHGEGSTFSTLYGLLLWDIIFMDGIPDVFRNAYQASPLDLCTDSFFASRGPAIEARLQRIHSAPAESLRAWVAAAWQAQEGRVASIVSWDRFASLQQAQDLVSCLGGPVLSGVCRRLAADFRHCRGGLPDLVVWNSQSRHFKLVEVKGPNDRLSHKQMLWLDELQKLGADVEVCHVVAVGAKSKSLT</sequence>
<feature type="chain" id="PRO_0000398620" description="Fanconi-associated nuclease 1">
    <location>
        <begin position="1"/>
        <end position="1025"/>
    </location>
</feature>
<feature type="domain" description="VRR-NUC">
    <location>
        <begin position="903"/>
        <end position="1015"/>
    </location>
</feature>
<feature type="zinc finger region" description="UBZ4-type" evidence="4">
    <location>
        <begin position="40"/>
        <end position="68"/>
    </location>
</feature>
<feature type="region of interest" description="Disordered" evidence="5">
    <location>
        <begin position="98"/>
        <end position="120"/>
    </location>
</feature>
<feature type="coiled-coil region" evidence="3">
    <location>
        <begin position="682"/>
        <end position="704"/>
    </location>
</feature>
<feature type="binding site" evidence="4">
    <location>
        <position position="43"/>
    </location>
    <ligand>
        <name>Zn(2+)</name>
        <dbReference type="ChEBI" id="CHEBI:29105"/>
    </ligand>
</feature>
<feature type="binding site" evidence="4">
    <location>
        <position position="46"/>
    </location>
    <ligand>
        <name>Zn(2+)</name>
        <dbReference type="ChEBI" id="CHEBI:29105"/>
    </ligand>
</feature>
<feature type="binding site" evidence="4">
    <location>
        <position position="58"/>
    </location>
    <ligand>
        <name>Zn(2+)</name>
        <dbReference type="ChEBI" id="CHEBI:29105"/>
    </ligand>
</feature>
<feature type="binding site" evidence="4">
    <location>
        <position position="63"/>
    </location>
    <ligand>
        <name>Zn(2+)</name>
        <dbReference type="ChEBI" id="CHEBI:29105"/>
    </ligand>
</feature>
<feature type="binding site" evidence="1">
    <location>
        <position position="842"/>
    </location>
    <ligand>
        <name>Mn(2+)</name>
        <dbReference type="ChEBI" id="CHEBI:29035"/>
        <label>2</label>
    </ligand>
</feature>
<feature type="binding site" evidence="1">
    <location>
        <position position="968"/>
    </location>
    <ligand>
        <name>Mn(2+)</name>
        <dbReference type="ChEBI" id="CHEBI:29035"/>
        <label>1</label>
    </ligand>
</feature>
<feature type="binding site" evidence="1">
    <location>
        <position position="968"/>
    </location>
    <ligand>
        <name>Mn(2+)</name>
        <dbReference type="ChEBI" id="CHEBI:29035"/>
        <label>2</label>
    </ligand>
</feature>
<feature type="binding site" evidence="1">
    <location>
        <position position="983"/>
    </location>
    <ligand>
        <name>Mn(2+)</name>
        <dbReference type="ChEBI" id="CHEBI:29035"/>
        <label>1</label>
    </ligand>
</feature>
<feature type="binding site" evidence="1">
    <location>
        <position position="984"/>
    </location>
    <ligand>
        <name>Mn(2+)</name>
        <dbReference type="ChEBI" id="CHEBI:29035"/>
        <label>1</label>
    </ligand>
</feature>
<feature type="modified residue" description="Phosphoserine" evidence="2">
    <location>
        <position position="182"/>
    </location>
</feature>
<reference key="1">
    <citation type="journal article" date="2010" name="Nature">
        <title>The sequence and de novo assembly of the giant panda genome.</title>
        <authorList>
            <person name="Li R."/>
            <person name="Fan W."/>
            <person name="Tian G."/>
            <person name="Zhu H."/>
            <person name="He L."/>
            <person name="Cai J."/>
            <person name="Huang Q."/>
            <person name="Cai Q."/>
            <person name="Li B."/>
            <person name="Bai Y."/>
            <person name="Zhang Z."/>
            <person name="Zhang Y."/>
            <person name="Wang W."/>
            <person name="Li J."/>
            <person name="Wei F."/>
            <person name="Li H."/>
            <person name="Jian M."/>
            <person name="Li J."/>
            <person name="Zhang Z."/>
            <person name="Nielsen R."/>
            <person name="Li D."/>
            <person name="Gu W."/>
            <person name="Yang Z."/>
            <person name="Xuan Z."/>
            <person name="Ryder O.A."/>
            <person name="Leung F.C."/>
            <person name="Zhou Y."/>
            <person name="Cao J."/>
            <person name="Sun X."/>
            <person name="Fu Y."/>
            <person name="Fang X."/>
            <person name="Guo X."/>
            <person name="Wang B."/>
            <person name="Hou R."/>
            <person name="Shen F."/>
            <person name="Mu B."/>
            <person name="Ni P."/>
            <person name="Lin R."/>
            <person name="Qian W."/>
            <person name="Wang G."/>
            <person name="Yu C."/>
            <person name="Nie W."/>
            <person name="Wang J."/>
            <person name="Wu Z."/>
            <person name="Liang H."/>
            <person name="Min J."/>
            <person name="Wu Q."/>
            <person name="Cheng S."/>
            <person name="Ruan J."/>
            <person name="Wang M."/>
            <person name="Shi Z."/>
            <person name="Wen M."/>
            <person name="Liu B."/>
            <person name="Ren X."/>
            <person name="Zheng H."/>
            <person name="Dong D."/>
            <person name="Cook K."/>
            <person name="Shan G."/>
            <person name="Zhang H."/>
            <person name="Kosiol C."/>
            <person name="Xie X."/>
            <person name="Lu Z."/>
            <person name="Zheng H."/>
            <person name="Li Y."/>
            <person name="Steiner C.C."/>
            <person name="Lam T.T."/>
            <person name="Lin S."/>
            <person name="Zhang Q."/>
            <person name="Li G."/>
            <person name="Tian J."/>
            <person name="Gong T."/>
            <person name="Liu H."/>
            <person name="Zhang D."/>
            <person name="Fang L."/>
            <person name="Ye C."/>
            <person name="Zhang J."/>
            <person name="Hu W."/>
            <person name="Xu A."/>
            <person name="Ren Y."/>
            <person name="Zhang G."/>
            <person name="Bruford M.W."/>
            <person name="Li Q."/>
            <person name="Ma L."/>
            <person name="Guo Y."/>
            <person name="An N."/>
            <person name="Hu Y."/>
            <person name="Zheng Y."/>
            <person name="Shi Y."/>
            <person name="Li Z."/>
            <person name="Liu Q."/>
            <person name="Chen Y."/>
            <person name="Zhao J."/>
            <person name="Qu N."/>
            <person name="Zhao S."/>
            <person name="Tian F."/>
            <person name="Wang X."/>
            <person name="Wang H."/>
            <person name="Xu L."/>
            <person name="Liu X."/>
            <person name="Vinar T."/>
            <person name="Wang Y."/>
            <person name="Lam T.W."/>
            <person name="Yiu S.M."/>
            <person name="Liu S."/>
            <person name="Zhang H."/>
            <person name="Li D."/>
            <person name="Huang Y."/>
            <person name="Wang X."/>
            <person name="Yang G."/>
            <person name="Jiang Z."/>
            <person name="Wang J."/>
            <person name="Qin N."/>
            <person name="Li L."/>
            <person name="Li J."/>
            <person name="Bolund L."/>
            <person name="Kristiansen K."/>
            <person name="Wong G.K."/>
            <person name="Olson M."/>
            <person name="Zhang X."/>
            <person name="Li S."/>
            <person name="Yang H."/>
            <person name="Wang J."/>
            <person name="Wang J."/>
        </authorList>
    </citation>
    <scope>NUCLEOTIDE SEQUENCE [LARGE SCALE GENOMIC DNA]</scope>
</reference>
<dbReference type="EC" id="3.1.21.-" evidence="2"/>
<dbReference type="EC" id="3.1.4.1" evidence="2"/>
<dbReference type="EMBL" id="GL193105">
    <property type="protein sequence ID" value="EFB17558.1"/>
    <property type="status" value="ALT_INIT"/>
    <property type="molecule type" value="Genomic_DNA"/>
</dbReference>
<dbReference type="RefSeq" id="XP_002924164.1">
    <property type="nucleotide sequence ID" value="XM_002924118.3"/>
</dbReference>
<dbReference type="RefSeq" id="XP_034523865.1">
    <property type="nucleotide sequence ID" value="XM_034667974.1"/>
</dbReference>
<dbReference type="SMR" id="D2HNY3"/>
<dbReference type="STRING" id="9646.ENSAMEP00000016241"/>
<dbReference type="GeneID" id="100481860"/>
<dbReference type="eggNOG" id="KOG2143">
    <property type="taxonomic scope" value="Eukaryota"/>
</dbReference>
<dbReference type="HOGENOM" id="CLU_005116_3_0_1"/>
<dbReference type="InParanoid" id="D2HNY3"/>
<dbReference type="OMA" id="ECRVESM"/>
<dbReference type="TreeFam" id="TF312870"/>
<dbReference type="Proteomes" id="UP000008912">
    <property type="component" value="Unassembled WGS sequence"/>
</dbReference>
<dbReference type="GO" id="GO:0005634">
    <property type="term" value="C:nucleus"/>
    <property type="evidence" value="ECO:0000250"/>
    <property type="project" value="UniProtKB"/>
</dbReference>
<dbReference type="GO" id="GO:0008409">
    <property type="term" value="F:5'-3' exonuclease activity"/>
    <property type="evidence" value="ECO:0000250"/>
    <property type="project" value="UniProtKB"/>
</dbReference>
<dbReference type="GO" id="GO:0017108">
    <property type="term" value="F:5'-flap endonuclease activity"/>
    <property type="evidence" value="ECO:0000250"/>
    <property type="project" value="UniProtKB"/>
</dbReference>
<dbReference type="GO" id="GO:0070336">
    <property type="term" value="F:flap-structured DNA binding"/>
    <property type="evidence" value="ECO:0000250"/>
    <property type="project" value="UniProtKB"/>
</dbReference>
<dbReference type="GO" id="GO:0004528">
    <property type="term" value="F:phosphodiesterase I activity"/>
    <property type="evidence" value="ECO:0007669"/>
    <property type="project" value="UniProtKB-EC"/>
</dbReference>
<dbReference type="GO" id="GO:0140036">
    <property type="term" value="F:ubiquitin-modified protein reader activity"/>
    <property type="evidence" value="ECO:0000250"/>
    <property type="project" value="UniProtKB"/>
</dbReference>
<dbReference type="GO" id="GO:0008270">
    <property type="term" value="F:zinc ion binding"/>
    <property type="evidence" value="ECO:0007669"/>
    <property type="project" value="UniProtKB-KW"/>
</dbReference>
<dbReference type="GO" id="GO:0006281">
    <property type="term" value="P:DNA repair"/>
    <property type="evidence" value="ECO:0000250"/>
    <property type="project" value="UniProtKB"/>
</dbReference>
<dbReference type="GO" id="GO:0000724">
    <property type="term" value="P:double-strand break repair via homologous recombination"/>
    <property type="evidence" value="ECO:0000250"/>
    <property type="project" value="UniProtKB"/>
</dbReference>
<dbReference type="GO" id="GO:0036297">
    <property type="term" value="P:interstrand cross-link repair"/>
    <property type="evidence" value="ECO:0000250"/>
    <property type="project" value="UniProtKB"/>
</dbReference>
<dbReference type="GO" id="GO:0006289">
    <property type="term" value="P:nucleotide-excision repair"/>
    <property type="evidence" value="ECO:0000250"/>
    <property type="project" value="UniProtKB"/>
</dbReference>
<dbReference type="CDD" id="cd22326">
    <property type="entry name" value="FAN1-like"/>
    <property type="match status" value="1"/>
</dbReference>
<dbReference type="FunFam" id="3.40.1350.10:FF:000004">
    <property type="entry name" value="Fanconi-associated nuclease"/>
    <property type="match status" value="1"/>
</dbReference>
<dbReference type="Gene3D" id="3.40.1350.10">
    <property type="match status" value="1"/>
</dbReference>
<dbReference type="InterPro" id="IPR033315">
    <property type="entry name" value="Fan1-like"/>
</dbReference>
<dbReference type="InterPro" id="IPR049132">
    <property type="entry name" value="FAN1-like_euk"/>
</dbReference>
<dbReference type="InterPro" id="IPR049126">
    <property type="entry name" value="FAN1-like_TPR"/>
</dbReference>
<dbReference type="InterPro" id="IPR049125">
    <property type="entry name" value="FAN1-like_WH"/>
</dbReference>
<dbReference type="InterPro" id="IPR049138">
    <property type="entry name" value="Fan1_SAP_met"/>
</dbReference>
<dbReference type="InterPro" id="IPR006642">
    <property type="entry name" value="Rad18_UBZ4"/>
</dbReference>
<dbReference type="InterPro" id="IPR011856">
    <property type="entry name" value="tRNA_endonuc-like_dom_sf"/>
</dbReference>
<dbReference type="InterPro" id="IPR014883">
    <property type="entry name" value="VRR_NUC"/>
</dbReference>
<dbReference type="PANTHER" id="PTHR15749">
    <property type="entry name" value="FANCONI-ASSOCIATED NUCLEASE 1"/>
    <property type="match status" value="1"/>
</dbReference>
<dbReference type="PANTHER" id="PTHR15749:SF4">
    <property type="entry name" value="FANCONI-ASSOCIATED NUCLEASE 1"/>
    <property type="match status" value="1"/>
</dbReference>
<dbReference type="Pfam" id="PF21315">
    <property type="entry name" value="FAN1_HTH"/>
    <property type="match status" value="1"/>
</dbReference>
<dbReference type="Pfam" id="PF21169">
    <property type="entry name" value="Fan1_SAP"/>
    <property type="match status" value="1"/>
</dbReference>
<dbReference type="Pfam" id="PF21170">
    <property type="entry name" value="FAN1_TPR"/>
    <property type="match status" value="1"/>
</dbReference>
<dbReference type="Pfam" id="PF08774">
    <property type="entry name" value="VRR_NUC"/>
    <property type="match status" value="1"/>
</dbReference>
<dbReference type="SMART" id="SM00990">
    <property type="entry name" value="VRR_NUC"/>
    <property type="match status" value="1"/>
</dbReference>
<dbReference type="SMART" id="SM00734">
    <property type="entry name" value="ZnF_Rad18"/>
    <property type="match status" value="1"/>
</dbReference>
<dbReference type="PROSITE" id="PS51908">
    <property type="entry name" value="ZF_UBZ4"/>
    <property type="match status" value="1"/>
</dbReference>
<organism>
    <name type="scientific">Ailuropoda melanoleuca</name>
    <name type="common">Giant panda</name>
    <dbReference type="NCBI Taxonomy" id="9646"/>
    <lineage>
        <taxon>Eukaryota</taxon>
        <taxon>Metazoa</taxon>
        <taxon>Chordata</taxon>
        <taxon>Craniata</taxon>
        <taxon>Vertebrata</taxon>
        <taxon>Euteleostomi</taxon>
        <taxon>Mammalia</taxon>
        <taxon>Eutheria</taxon>
        <taxon>Laurasiatheria</taxon>
        <taxon>Carnivora</taxon>
        <taxon>Caniformia</taxon>
        <taxon>Ursidae</taxon>
        <taxon>Ailuropoda</taxon>
    </lineage>
</organism>
<evidence type="ECO:0000250" key="1">
    <source>
        <dbReference type="UniProtKB" id="Q9I2N0"/>
    </source>
</evidence>
<evidence type="ECO:0000250" key="2">
    <source>
        <dbReference type="UniProtKB" id="Q9Y2M0"/>
    </source>
</evidence>
<evidence type="ECO:0000255" key="3"/>
<evidence type="ECO:0000255" key="4">
    <source>
        <dbReference type="PROSITE-ProRule" id="PRU01256"/>
    </source>
</evidence>
<evidence type="ECO:0000256" key="5">
    <source>
        <dbReference type="SAM" id="MobiDB-lite"/>
    </source>
</evidence>
<evidence type="ECO:0000305" key="6"/>
<protein>
    <recommendedName>
        <fullName evidence="2">Fanconi-associated nuclease 1</fullName>
        <ecNumber evidence="2">3.1.21.-</ecNumber>
        <ecNumber evidence="2">3.1.4.1</ecNumber>
    </recommendedName>
    <alternativeName>
        <fullName evidence="2">FANCD2/FANCI-associated nuclease 1</fullName>
    </alternativeName>
    <alternativeName>
        <fullName>Myotubularin-related protein 15</fullName>
    </alternativeName>
</protein>
<name>FAN1_AILME</name>
<comment type="function">
    <text evidence="2">Nuclease required for the repair of DNA interstrand cross-links (ICL) recruited at sites of DNA damage by monoubiquitinated FANCD2. Specifically involved in repair of ICL-induced DNA breaks by being required for efficient homologous recombination, probably in the resolution of homologous recombination intermediates. Not involved in DNA double-strand breaks resection. Acts as a 5'-3' exonuclease that anchors at a cut end of DNA and cleaves DNA successively at every third nucleotide, allowing to excise an ICL from one strand through flanking incisions. Probably keeps excising with 3'-flap annealing until it reaches and unhooks the ICL. Acts at sites that have a 5'-terminal phosphate anchor at a nick or a 1- or 2-nucleotide flap and is augmented by a 3' flap. Also has endonuclease activity toward 5'-flaps.</text>
</comment>
<comment type="catalytic activity">
    <reaction evidence="2">
        <text>Hydrolytically removes 5'-nucleotides successively from the 3'-hydroxy termini of 3'-hydroxy-terminated oligonucleotides.</text>
        <dbReference type="EC" id="3.1.4.1"/>
    </reaction>
</comment>
<comment type="cofactor">
    <cofactor evidence="2">
        <name>Mn(2+)</name>
        <dbReference type="ChEBI" id="CHEBI:29035"/>
    </cofactor>
    <cofactor evidence="2">
        <name>Mg(2+)</name>
        <dbReference type="ChEBI" id="CHEBI:18420"/>
    </cofactor>
    <text evidence="1 2">Binds 2 magnesium or manganese ions per subunit.</text>
</comment>
<comment type="subunit">
    <text evidence="2">Interacts with FANCD2 (when monoubiquitinated). Interacts with FANCI, MLH1, MLH3 and PMS2.</text>
</comment>
<comment type="subcellular location">
    <subcellularLocation>
        <location evidence="2">Nucleus</location>
    </subcellularLocation>
    <text evidence="2">Localizes at sites of DNA damage following recruitment by monoubiquitinated FANCD2. Localizes to stalled replication forks via its UBZ4-type zinc finger.</text>
</comment>
<comment type="domain">
    <text evidence="2">The UBZ4-type zinc finger specifically binds monoubiquitinated FANCD2.</text>
</comment>
<comment type="domain">
    <text evidence="2">The KEN box and D-box are required for interaction with FZR1/CDH1 and essential for APC(CDH1)-mediated ubiquitination.</text>
</comment>
<comment type="PTM">
    <text evidence="2">Ubiquitinated and degraded during mitotic exit by the APC/C-Cdh1 complex.</text>
</comment>
<comment type="similarity">
    <text evidence="6">Belongs to the FAN1 family.</text>
</comment>
<comment type="sequence caution" evidence="6">
    <conflict type="erroneous initiation">
        <sequence resource="EMBL-CDS" id="EFB17558"/>
    </conflict>
    <text>Extended N-terminus.</text>
</comment>
<accession>D2HNY3</accession>
<gene>
    <name type="primary">FAN1</name>
    <name type="synonym">MTMR15</name>
    <name type="ORF">PANDA_013441</name>
</gene>